<proteinExistence type="inferred from homology"/>
<sequence length="1005" mass="110190">MSALSASLAAAAAAARASETSRESNNVAVTKARPPQHTLVKPAPAKPPRPVARRPKQPVKITVDTSVANTPAPQGSSATSAAAAAARHFKKQKDEQSSPKLSPHHRPPASHRNSGESAKTPSSDSRPASTTSTIPVTPVSATTPSSTVAAAASAAAKRSSTFNKSVPTPVVSDIMKKEQEENRAAAAAAAAQEKATQIIRDLPSPSNSVRSKRLSQSSLVPVLSDEDIYNHRRYARSSQSFATIPTDEDSPGEMGDFEDNNQVHRERARGIQSAAKHANRLSQTSMDSTHTSQQLQPVVSPHTGLPQEGSVLAAALKAGSNASSTMERISLTNEAKEREKAEKRQRKDAKAKAKLLAQANAVYQQSTNESHHAHHHQYHQGNIFKRVIGKSGKPIDPFQGFSPNFSERPGEHFHNHQREMQGAPDGIRRSMDTSRQSIDAPRQSLDAARQSIDTPRELTTNDTSPIPIQPLKSHDAGAVSDLPTSLDEPGLSGHPHLQQSFSNNNALQTVKSSTDDSMSIASLDSVDDSGPGRPPLLAPIPIRNASIIPVSSESESEDIRRGHRRHLSSSQSQRNSLQFPMSPTFSASPAKQLITPEQLLPKRRRGIARTPSVSSSAPRSSSPVISIPLERSSTLQSTLQGSPMNSPVAKSPVFFEGNNGSTNGGLGSSMSNSPPDSELALTPSESTAHSYFAREYREPKSSSTRGVEGASRLAKKLPHRHLAAGGKSIVKSIWNKATPDAPPPPPVSTGGMKTSLRKQPKKKFNEDKPWKHHNDADTLTDADRKRYDGVWATNRGAHVPYYMEPEEYDILIDEEEFYDEGFLSDSDFTDSDSDDDSVSSAEYIMSGENIGNDDVVVSDQNDAVHGYIVSRLWRRSRLPDERLSDIWELVDRCNDGTLDREGFLVGMWLVDQCLYGRKLPNKVDPRVWGSVGRLNVNIKIRQKEPKRNSAKRKARRKVRRDRKELVRERERNEKERRKDEKKEKKDEKKDKKDDRRRDKKRVGEA</sequence>
<evidence type="ECO:0000250" key="1"/>
<evidence type="ECO:0000255" key="2">
    <source>
        <dbReference type="PROSITE-ProRule" id="PRU00077"/>
    </source>
</evidence>
<evidence type="ECO:0000256" key="3">
    <source>
        <dbReference type="SAM" id="MobiDB-lite"/>
    </source>
</evidence>
<evidence type="ECO:0000305" key="4"/>
<gene>
    <name type="primary">IRS4</name>
    <name type="ordered locus">YALI0E29689g</name>
</gene>
<feature type="chain" id="PRO_0000308766" description="Increased rDNA silencing protein 4">
    <location>
        <begin position="1"/>
        <end position="1005"/>
    </location>
</feature>
<feature type="domain" description="EH" evidence="2">
    <location>
        <begin position="845"/>
        <end position="934"/>
    </location>
</feature>
<feature type="region of interest" description="Disordered" evidence="3">
    <location>
        <begin position="1"/>
        <end position="170"/>
    </location>
</feature>
<feature type="region of interest" description="Disordered" evidence="3">
    <location>
        <begin position="183"/>
        <end position="219"/>
    </location>
</feature>
<feature type="region of interest" description="Disordered" evidence="3">
    <location>
        <begin position="239"/>
        <end position="258"/>
    </location>
</feature>
<feature type="region of interest" description="Disordered" evidence="3">
    <location>
        <begin position="272"/>
        <end position="350"/>
    </location>
</feature>
<feature type="region of interest" description="Disordered" evidence="3">
    <location>
        <begin position="402"/>
        <end position="587"/>
    </location>
</feature>
<feature type="region of interest" description="Disordered" evidence="3">
    <location>
        <begin position="602"/>
        <end position="624"/>
    </location>
</feature>
<feature type="region of interest" description="Disordered" evidence="3">
    <location>
        <begin position="657"/>
        <end position="682"/>
    </location>
</feature>
<feature type="region of interest" description="Disordered" evidence="3">
    <location>
        <begin position="735"/>
        <end position="776"/>
    </location>
</feature>
<feature type="region of interest" description="Disordered" evidence="3">
    <location>
        <begin position="942"/>
        <end position="1005"/>
    </location>
</feature>
<feature type="compositionally biased region" description="Low complexity" evidence="3">
    <location>
        <begin position="1"/>
        <end position="18"/>
    </location>
</feature>
<feature type="compositionally biased region" description="Polar residues" evidence="3">
    <location>
        <begin position="63"/>
        <end position="75"/>
    </location>
</feature>
<feature type="compositionally biased region" description="Low complexity" evidence="3">
    <location>
        <begin position="76"/>
        <end position="86"/>
    </location>
</feature>
<feature type="compositionally biased region" description="Polar residues" evidence="3">
    <location>
        <begin position="111"/>
        <end position="126"/>
    </location>
</feature>
<feature type="compositionally biased region" description="Low complexity" evidence="3">
    <location>
        <begin position="127"/>
        <end position="161"/>
    </location>
</feature>
<feature type="compositionally biased region" description="Polar residues" evidence="3">
    <location>
        <begin position="204"/>
        <end position="219"/>
    </location>
</feature>
<feature type="compositionally biased region" description="Acidic residues" evidence="3">
    <location>
        <begin position="246"/>
        <end position="258"/>
    </location>
</feature>
<feature type="compositionally biased region" description="Polar residues" evidence="3">
    <location>
        <begin position="280"/>
        <end position="297"/>
    </location>
</feature>
<feature type="compositionally biased region" description="Polar residues" evidence="3">
    <location>
        <begin position="320"/>
        <end position="333"/>
    </location>
</feature>
<feature type="compositionally biased region" description="Basic and acidic residues" evidence="3">
    <location>
        <begin position="408"/>
        <end position="419"/>
    </location>
</feature>
<feature type="compositionally biased region" description="Polar residues" evidence="3">
    <location>
        <begin position="451"/>
        <end position="466"/>
    </location>
</feature>
<feature type="compositionally biased region" description="Polar residues" evidence="3">
    <location>
        <begin position="497"/>
        <end position="522"/>
    </location>
</feature>
<feature type="compositionally biased region" description="Low complexity" evidence="3">
    <location>
        <begin position="568"/>
        <end position="578"/>
    </location>
</feature>
<feature type="compositionally biased region" description="Low complexity" evidence="3">
    <location>
        <begin position="608"/>
        <end position="624"/>
    </location>
</feature>
<feature type="compositionally biased region" description="Basic and acidic residues" evidence="3">
    <location>
        <begin position="763"/>
        <end position="776"/>
    </location>
</feature>
<feature type="compositionally biased region" description="Basic residues" evidence="3">
    <location>
        <begin position="948"/>
        <end position="960"/>
    </location>
</feature>
<feature type="compositionally biased region" description="Basic and acidic residues" evidence="3">
    <location>
        <begin position="961"/>
        <end position="1005"/>
    </location>
</feature>
<organism>
    <name type="scientific">Yarrowia lipolytica (strain CLIB 122 / E 150)</name>
    <name type="common">Yeast</name>
    <name type="synonym">Candida lipolytica</name>
    <dbReference type="NCBI Taxonomy" id="284591"/>
    <lineage>
        <taxon>Eukaryota</taxon>
        <taxon>Fungi</taxon>
        <taxon>Dikarya</taxon>
        <taxon>Ascomycota</taxon>
        <taxon>Saccharomycotina</taxon>
        <taxon>Dipodascomycetes</taxon>
        <taxon>Dipodascales</taxon>
        <taxon>Dipodascales incertae sedis</taxon>
        <taxon>Yarrowia</taxon>
    </lineage>
</organism>
<comment type="function">
    <text evidence="1">Positive regulator of phosphatidylinositol 4,5-bisphosphate turnover and negatively regulates signaling through the cell integrity pathway. Involved in rDNA silencing (By similarity).</text>
</comment>
<comment type="similarity">
    <text evidence="4">Belongs to the IRS4 family.</text>
</comment>
<name>IRS4_YARLI</name>
<keyword id="KW-0443">Lipid metabolism</keyword>
<keyword id="KW-1185">Reference proteome</keyword>
<protein>
    <recommendedName>
        <fullName>Increased rDNA silencing protein 4</fullName>
    </recommendedName>
</protein>
<reference key="1">
    <citation type="journal article" date="2004" name="Nature">
        <title>Genome evolution in yeasts.</title>
        <authorList>
            <person name="Dujon B."/>
            <person name="Sherman D."/>
            <person name="Fischer G."/>
            <person name="Durrens P."/>
            <person name="Casaregola S."/>
            <person name="Lafontaine I."/>
            <person name="de Montigny J."/>
            <person name="Marck C."/>
            <person name="Neuveglise C."/>
            <person name="Talla E."/>
            <person name="Goffard N."/>
            <person name="Frangeul L."/>
            <person name="Aigle M."/>
            <person name="Anthouard V."/>
            <person name="Babour A."/>
            <person name="Barbe V."/>
            <person name="Barnay S."/>
            <person name="Blanchin S."/>
            <person name="Beckerich J.-M."/>
            <person name="Beyne E."/>
            <person name="Bleykasten C."/>
            <person name="Boisrame A."/>
            <person name="Boyer J."/>
            <person name="Cattolico L."/>
            <person name="Confanioleri F."/>
            <person name="de Daruvar A."/>
            <person name="Despons L."/>
            <person name="Fabre E."/>
            <person name="Fairhead C."/>
            <person name="Ferry-Dumazet H."/>
            <person name="Groppi A."/>
            <person name="Hantraye F."/>
            <person name="Hennequin C."/>
            <person name="Jauniaux N."/>
            <person name="Joyet P."/>
            <person name="Kachouri R."/>
            <person name="Kerrest A."/>
            <person name="Koszul R."/>
            <person name="Lemaire M."/>
            <person name="Lesur I."/>
            <person name="Ma L."/>
            <person name="Muller H."/>
            <person name="Nicaud J.-M."/>
            <person name="Nikolski M."/>
            <person name="Oztas S."/>
            <person name="Ozier-Kalogeropoulos O."/>
            <person name="Pellenz S."/>
            <person name="Potier S."/>
            <person name="Richard G.-F."/>
            <person name="Straub M.-L."/>
            <person name="Suleau A."/>
            <person name="Swennen D."/>
            <person name="Tekaia F."/>
            <person name="Wesolowski-Louvel M."/>
            <person name="Westhof E."/>
            <person name="Wirth B."/>
            <person name="Zeniou-Meyer M."/>
            <person name="Zivanovic Y."/>
            <person name="Bolotin-Fukuhara M."/>
            <person name="Thierry A."/>
            <person name="Bouchier C."/>
            <person name="Caudron B."/>
            <person name="Scarpelli C."/>
            <person name="Gaillardin C."/>
            <person name="Weissenbach J."/>
            <person name="Wincker P."/>
            <person name="Souciet J.-L."/>
        </authorList>
    </citation>
    <scope>NUCLEOTIDE SEQUENCE [LARGE SCALE GENOMIC DNA]</scope>
    <source>
        <strain>CLIB 122 / E 150</strain>
    </source>
</reference>
<dbReference type="EMBL" id="CR382131">
    <property type="protein sequence ID" value="CAG80167.1"/>
    <property type="molecule type" value="Genomic_DNA"/>
</dbReference>
<dbReference type="RefSeq" id="XP_504563.1">
    <property type="nucleotide sequence ID" value="XM_504563.1"/>
</dbReference>
<dbReference type="SMR" id="Q6C449"/>
<dbReference type="STRING" id="284591.Q6C449"/>
<dbReference type="EnsemblFungi" id="CAG80167">
    <property type="protein sequence ID" value="CAG80167"/>
    <property type="gene ID" value="YALI0_E29689g"/>
</dbReference>
<dbReference type="KEGG" id="yli:2911937"/>
<dbReference type="VEuPathDB" id="FungiDB:YALI0_E29689g"/>
<dbReference type="HOGENOM" id="CLU_298802_0_0_1"/>
<dbReference type="InParanoid" id="Q6C449"/>
<dbReference type="OrthoDB" id="122756at4891"/>
<dbReference type="Proteomes" id="UP000001300">
    <property type="component" value="Chromosome E"/>
</dbReference>
<dbReference type="GO" id="GO:0005737">
    <property type="term" value="C:cytoplasm"/>
    <property type="evidence" value="ECO:0000318"/>
    <property type="project" value="GO_Central"/>
</dbReference>
<dbReference type="GO" id="GO:0005886">
    <property type="term" value="C:plasma membrane"/>
    <property type="evidence" value="ECO:0000318"/>
    <property type="project" value="GO_Central"/>
</dbReference>
<dbReference type="GO" id="GO:0006897">
    <property type="term" value="P:endocytosis"/>
    <property type="evidence" value="ECO:0000318"/>
    <property type="project" value="GO_Central"/>
</dbReference>
<dbReference type="GO" id="GO:0016197">
    <property type="term" value="P:endosomal transport"/>
    <property type="evidence" value="ECO:0000318"/>
    <property type="project" value="GO_Central"/>
</dbReference>
<dbReference type="GO" id="GO:0006629">
    <property type="term" value="P:lipid metabolic process"/>
    <property type="evidence" value="ECO:0007669"/>
    <property type="project" value="UniProtKB-KW"/>
</dbReference>
<dbReference type="CDD" id="cd00052">
    <property type="entry name" value="EH"/>
    <property type="match status" value="1"/>
</dbReference>
<dbReference type="Gene3D" id="1.10.238.10">
    <property type="entry name" value="EF-hand"/>
    <property type="match status" value="1"/>
</dbReference>
<dbReference type="InterPro" id="IPR011992">
    <property type="entry name" value="EF-hand-dom_pair"/>
</dbReference>
<dbReference type="InterPro" id="IPR000261">
    <property type="entry name" value="EH_dom"/>
</dbReference>
<dbReference type="Pfam" id="PF12763">
    <property type="entry name" value="EH"/>
    <property type="match status" value="1"/>
</dbReference>
<dbReference type="SMART" id="SM00027">
    <property type="entry name" value="EH"/>
    <property type="match status" value="1"/>
</dbReference>
<dbReference type="SUPFAM" id="SSF47473">
    <property type="entry name" value="EF-hand"/>
    <property type="match status" value="1"/>
</dbReference>
<dbReference type="PROSITE" id="PS50031">
    <property type="entry name" value="EH"/>
    <property type="match status" value="1"/>
</dbReference>
<accession>Q6C449</accession>